<keyword id="KW-0997">Cell inner membrane</keyword>
<keyword id="KW-1003">Cell membrane</keyword>
<keyword id="KW-0472">Membrane</keyword>
<keyword id="KW-0812">Transmembrane</keyword>
<keyword id="KW-1133">Transmembrane helix</keyword>
<keyword id="KW-0813">Transport</keyword>
<evidence type="ECO:0000255" key="1">
    <source>
        <dbReference type="HAMAP-Rule" id="MF_01423"/>
    </source>
</evidence>
<proteinExistence type="evidence at transcript level"/>
<feature type="chain" id="PRO_1000145649" description="Multidrug resistance protein MdtB">
    <location>
        <begin position="1"/>
        <end position="1040"/>
    </location>
</feature>
<feature type="transmembrane region" description="Helical" evidence="1">
    <location>
        <begin position="16"/>
        <end position="36"/>
    </location>
</feature>
<feature type="transmembrane region" description="Helical" evidence="1">
    <location>
        <begin position="347"/>
        <end position="367"/>
    </location>
</feature>
<feature type="transmembrane region" description="Helical" evidence="1">
    <location>
        <begin position="369"/>
        <end position="389"/>
    </location>
</feature>
<feature type="transmembrane region" description="Helical" evidence="1">
    <location>
        <begin position="396"/>
        <end position="416"/>
    </location>
</feature>
<feature type="transmembrane region" description="Helical" evidence="1">
    <location>
        <begin position="440"/>
        <end position="460"/>
    </location>
</feature>
<feature type="transmembrane region" description="Helical" evidence="1">
    <location>
        <begin position="472"/>
        <end position="492"/>
    </location>
</feature>
<feature type="transmembrane region" description="Helical" evidence="1">
    <location>
        <begin position="537"/>
        <end position="557"/>
    </location>
</feature>
<feature type="transmembrane region" description="Helical" evidence="1">
    <location>
        <begin position="863"/>
        <end position="883"/>
    </location>
</feature>
<feature type="transmembrane region" description="Helical" evidence="1">
    <location>
        <begin position="888"/>
        <end position="908"/>
    </location>
</feature>
<feature type="transmembrane region" description="Helical" evidence="1">
    <location>
        <begin position="911"/>
        <end position="931"/>
    </location>
</feature>
<feature type="transmembrane region" description="Helical" evidence="1">
    <location>
        <begin position="968"/>
        <end position="988"/>
    </location>
</feature>
<feature type="transmembrane region" description="Helical" evidence="1">
    <location>
        <begin position="998"/>
        <end position="1018"/>
    </location>
</feature>
<organism>
    <name type="scientific">Escherichia coli O7:K1 (strain IAI39 / ExPEC)</name>
    <dbReference type="NCBI Taxonomy" id="585057"/>
    <lineage>
        <taxon>Bacteria</taxon>
        <taxon>Pseudomonadati</taxon>
        <taxon>Pseudomonadota</taxon>
        <taxon>Gammaproteobacteria</taxon>
        <taxon>Enterobacterales</taxon>
        <taxon>Enterobacteriaceae</taxon>
        <taxon>Escherichia</taxon>
    </lineage>
</organism>
<name>MDTB_ECO7I</name>
<reference key="1">
    <citation type="journal article" date="2009" name="PLoS Genet.">
        <title>Organised genome dynamics in the Escherichia coli species results in highly diverse adaptive paths.</title>
        <authorList>
            <person name="Touchon M."/>
            <person name="Hoede C."/>
            <person name="Tenaillon O."/>
            <person name="Barbe V."/>
            <person name="Baeriswyl S."/>
            <person name="Bidet P."/>
            <person name="Bingen E."/>
            <person name="Bonacorsi S."/>
            <person name="Bouchier C."/>
            <person name="Bouvet O."/>
            <person name="Calteau A."/>
            <person name="Chiapello H."/>
            <person name="Clermont O."/>
            <person name="Cruveiller S."/>
            <person name="Danchin A."/>
            <person name="Diard M."/>
            <person name="Dossat C."/>
            <person name="Karoui M.E."/>
            <person name="Frapy E."/>
            <person name="Garry L."/>
            <person name="Ghigo J.M."/>
            <person name="Gilles A.M."/>
            <person name="Johnson J."/>
            <person name="Le Bouguenec C."/>
            <person name="Lescat M."/>
            <person name="Mangenot S."/>
            <person name="Martinez-Jehanne V."/>
            <person name="Matic I."/>
            <person name="Nassif X."/>
            <person name="Oztas S."/>
            <person name="Petit M.A."/>
            <person name="Pichon C."/>
            <person name="Rouy Z."/>
            <person name="Ruf C.S."/>
            <person name="Schneider D."/>
            <person name="Tourret J."/>
            <person name="Vacherie B."/>
            <person name="Vallenet D."/>
            <person name="Medigue C."/>
            <person name="Rocha E.P.C."/>
            <person name="Denamur E."/>
        </authorList>
    </citation>
    <scope>NUCLEOTIDE SEQUENCE [LARGE SCALE GENOMIC DNA]</scope>
    <source>
        <strain>IAI39 / ExPEC</strain>
    </source>
</reference>
<protein>
    <recommendedName>
        <fullName evidence="1">Multidrug resistance protein MdtB</fullName>
    </recommendedName>
    <alternativeName>
        <fullName evidence="1">Multidrug transporter MdtB</fullName>
    </alternativeName>
</protein>
<sequence>MQVLPPSSTGGPSRLFIMRPVATTLLMVAILLAGIIGYRALPVSALPEVDYPTIQVVTLYPGASPDVMTSAVTAPLERQFGQMSGLKQMSSQSSGGASVITLQFQLTLPLDVAEQEVQAAINAATNLLPSDLPNPPVYSKVNPADPPIMTLAVTSTAMPMTQVEDMVETRVAQKISQISGVGLVTLSGGQRPAVRVKLNAQAIAALGLTSETVRTAITGANVNSAKGSLDGPSRAVTLSANDQMQSAEEYRQLIIAYQNSAPIRLGDVATVEQGAENSWLGAWANKEQAIVMNVQRQPGANIISTADSIRQMLPQLTESLPKSVKVTVLSDRTTNIRASVDDTQFELMMAIALVVMIIYLFLRNIPATIIPGVAVPLSLIGTFAVMVFLDFSINNLTLMALTIATGFVVDDAIVVIENISRYIEKGEKPLAAALKGAGEIGFTIISLTFSLIAVLIPLLFMGDIVGRLFREFAITLAVAILISAVVSLTLTPMMCARMLSQESLRKQNRFSRASEKMFDRIIAAYGRGLAKVLNHPWLTLSVALSTLLLSVLLWVFIPKGFFPVQDNGIIQGTLQAPQSSSFTNMAQRQRQVADVILQDPAVQSLTSFVGVDGTNPSLNSARLQINLKPLDERDDRVQKVIARLQTAVDKVPGVDLFLQPTQDLTIDTQVSRTQYQFTLQATSLDALSTWVPQLVEKLQQLPQLSDVSSDWQDKGLVAYVNVDRDSASRLGISMADVDNALYNAFGQRLISTIYTQANQYRVVLEHNTENTPGLAALDTIRLTSSDGGVVPLSSIAKIEQRFAPLSINHLDQFPVTTISFNVPDNYSLGDAVQAIMDTEKTLNLPVDITTQFQGSTLAFQSALGSTVWLIVAAVVAMYIVLGILYESFIHPITILSTLPTAGVGALLALMIAGSELDVIAIIGIILLIGIVKKNAIMMIDFALAAEREQGMSPRDAIYQACLLRFRPILMTTLAALLGALPLMLSTGVGAELRRPLGIGMVGGLIVSQVLTLFTTPVIYLLFDRLALWTKSRFARHEEEA</sequence>
<dbReference type="EMBL" id="CU928164">
    <property type="protein sequence ID" value="CAR17076.1"/>
    <property type="molecule type" value="Genomic_DNA"/>
</dbReference>
<dbReference type="RefSeq" id="WP_001197916.1">
    <property type="nucleotide sequence ID" value="NC_011750.1"/>
</dbReference>
<dbReference type="RefSeq" id="YP_002406961.1">
    <property type="nucleotide sequence ID" value="NC_011750.1"/>
</dbReference>
<dbReference type="SMR" id="B7NQB1"/>
<dbReference type="STRING" id="585057.ECIAI39_0939"/>
<dbReference type="KEGG" id="ect:ECIAI39_0939"/>
<dbReference type="PATRIC" id="fig|585057.6.peg.989"/>
<dbReference type="HOGENOM" id="CLU_002755_1_2_6"/>
<dbReference type="Proteomes" id="UP000000749">
    <property type="component" value="Chromosome"/>
</dbReference>
<dbReference type="GO" id="GO:0005886">
    <property type="term" value="C:plasma membrane"/>
    <property type="evidence" value="ECO:0007669"/>
    <property type="project" value="UniProtKB-SubCell"/>
</dbReference>
<dbReference type="GO" id="GO:0042910">
    <property type="term" value="F:xenobiotic transmembrane transporter activity"/>
    <property type="evidence" value="ECO:0007669"/>
    <property type="project" value="TreeGrafter"/>
</dbReference>
<dbReference type="FunFam" id="1.20.1640.10:FF:000001">
    <property type="entry name" value="Efflux pump membrane transporter"/>
    <property type="match status" value="1"/>
</dbReference>
<dbReference type="FunFam" id="3.30.70.1430:FF:000001">
    <property type="entry name" value="Efflux pump membrane transporter"/>
    <property type="match status" value="1"/>
</dbReference>
<dbReference type="FunFam" id="3.30.2090.10:FF:000003">
    <property type="entry name" value="Multidrug resistance protein MdtB"/>
    <property type="match status" value="1"/>
</dbReference>
<dbReference type="FunFam" id="3.30.2090.10:FF:000006">
    <property type="entry name" value="Multidrug resistance protein MdtB"/>
    <property type="match status" value="1"/>
</dbReference>
<dbReference type="Gene3D" id="3.30.70.1430">
    <property type="entry name" value="Multidrug efflux transporter AcrB pore domain"/>
    <property type="match status" value="2"/>
</dbReference>
<dbReference type="Gene3D" id="3.30.70.1440">
    <property type="entry name" value="Multidrug efflux transporter AcrB pore domain"/>
    <property type="match status" value="1"/>
</dbReference>
<dbReference type="Gene3D" id="3.30.70.1320">
    <property type="entry name" value="Multidrug efflux transporter AcrB pore domain like"/>
    <property type="match status" value="1"/>
</dbReference>
<dbReference type="Gene3D" id="3.30.2090.10">
    <property type="entry name" value="Multidrug efflux transporter AcrB TolC docking domain, DN and DC subdomains"/>
    <property type="match status" value="2"/>
</dbReference>
<dbReference type="Gene3D" id="1.20.1640.10">
    <property type="entry name" value="Multidrug efflux transporter AcrB transmembrane domain"/>
    <property type="match status" value="2"/>
</dbReference>
<dbReference type="HAMAP" id="MF_01423">
    <property type="entry name" value="MdtB"/>
    <property type="match status" value="1"/>
</dbReference>
<dbReference type="InterPro" id="IPR027463">
    <property type="entry name" value="AcrB_DN_DC_subdom"/>
</dbReference>
<dbReference type="InterPro" id="IPR001036">
    <property type="entry name" value="Acrflvin-R"/>
</dbReference>
<dbReference type="InterPro" id="IPR022831">
    <property type="entry name" value="Multidrug-R_MdtB"/>
</dbReference>
<dbReference type="NCBIfam" id="NF007798">
    <property type="entry name" value="PRK10503.1"/>
    <property type="match status" value="1"/>
</dbReference>
<dbReference type="NCBIfam" id="NF033617">
    <property type="entry name" value="RND_permease_2"/>
    <property type="match status" value="1"/>
</dbReference>
<dbReference type="PANTHER" id="PTHR32063">
    <property type="match status" value="1"/>
</dbReference>
<dbReference type="PANTHER" id="PTHR32063:SF21">
    <property type="entry name" value="MULTIDRUG RESISTANCE PROTEIN MDTB"/>
    <property type="match status" value="1"/>
</dbReference>
<dbReference type="Pfam" id="PF00873">
    <property type="entry name" value="ACR_tran"/>
    <property type="match status" value="1"/>
</dbReference>
<dbReference type="PRINTS" id="PR00702">
    <property type="entry name" value="ACRIFLAVINRP"/>
</dbReference>
<dbReference type="SUPFAM" id="SSF82693">
    <property type="entry name" value="Multidrug efflux transporter AcrB pore domain, PN1, PN2, PC1 and PC2 subdomains"/>
    <property type="match status" value="3"/>
</dbReference>
<dbReference type="SUPFAM" id="SSF82714">
    <property type="entry name" value="Multidrug efflux transporter AcrB TolC docking domain, DN and DC subdomains"/>
    <property type="match status" value="2"/>
</dbReference>
<dbReference type="SUPFAM" id="SSF82866">
    <property type="entry name" value="Multidrug efflux transporter AcrB transmembrane domain"/>
    <property type="match status" value="2"/>
</dbReference>
<accession>B7NQB1</accession>
<comment type="function">
    <text evidence="1">The MdtABC tripartite complex confers resistance against novobiocin and deoxycholate.</text>
</comment>
<comment type="subunit">
    <text evidence="1">Part of a tripartite efflux system composed of MdtA, MdtB and MdtC. MdtB forms a heteromultimer with MdtC.</text>
</comment>
<comment type="subcellular location">
    <subcellularLocation>
        <location evidence="1">Cell inner membrane</location>
        <topology evidence="1">Multi-pass membrane protein</topology>
    </subcellularLocation>
</comment>
<comment type="induction">
    <text>The mdtABC operon is transcriptionally activated by BaeR.</text>
</comment>
<comment type="similarity">
    <text evidence="1">Belongs to the resistance-nodulation-cell division (RND) (TC 2.A.6) family. MdtB subfamily.</text>
</comment>
<gene>
    <name evidence="1" type="primary">mdtB</name>
    <name type="ordered locus">ECIAI39_0939</name>
</gene>